<reference key="1">
    <citation type="journal article" date="1997" name="Microbiology">
        <title>Sequencing and functional annotation of the Bacillus subtilis genes in the 200 kb rrnB-dnaB region.</title>
        <authorList>
            <person name="Lapidus A."/>
            <person name="Galleron N."/>
            <person name="Sorokin A."/>
            <person name="Ehrlich S.D."/>
        </authorList>
    </citation>
    <scope>NUCLEOTIDE SEQUENCE [GENOMIC DNA]</scope>
    <source>
        <strain>168</strain>
    </source>
</reference>
<reference key="2">
    <citation type="journal article" date="1997" name="Nature">
        <title>The complete genome sequence of the Gram-positive bacterium Bacillus subtilis.</title>
        <authorList>
            <person name="Kunst F."/>
            <person name="Ogasawara N."/>
            <person name="Moszer I."/>
            <person name="Albertini A.M."/>
            <person name="Alloni G."/>
            <person name="Azevedo V."/>
            <person name="Bertero M.G."/>
            <person name="Bessieres P."/>
            <person name="Bolotin A."/>
            <person name="Borchert S."/>
            <person name="Borriss R."/>
            <person name="Boursier L."/>
            <person name="Brans A."/>
            <person name="Braun M."/>
            <person name="Brignell S.C."/>
            <person name="Bron S."/>
            <person name="Brouillet S."/>
            <person name="Bruschi C.V."/>
            <person name="Caldwell B."/>
            <person name="Capuano V."/>
            <person name="Carter N.M."/>
            <person name="Choi S.-K."/>
            <person name="Codani J.-J."/>
            <person name="Connerton I.F."/>
            <person name="Cummings N.J."/>
            <person name="Daniel R.A."/>
            <person name="Denizot F."/>
            <person name="Devine K.M."/>
            <person name="Duesterhoeft A."/>
            <person name="Ehrlich S.D."/>
            <person name="Emmerson P.T."/>
            <person name="Entian K.-D."/>
            <person name="Errington J."/>
            <person name="Fabret C."/>
            <person name="Ferrari E."/>
            <person name="Foulger D."/>
            <person name="Fritz C."/>
            <person name="Fujita M."/>
            <person name="Fujita Y."/>
            <person name="Fuma S."/>
            <person name="Galizzi A."/>
            <person name="Galleron N."/>
            <person name="Ghim S.-Y."/>
            <person name="Glaser P."/>
            <person name="Goffeau A."/>
            <person name="Golightly E.J."/>
            <person name="Grandi G."/>
            <person name="Guiseppi G."/>
            <person name="Guy B.J."/>
            <person name="Haga K."/>
            <person name="Haiech J."/>
            <person name="Harwood C.R."/>
            <person name="Henaut A."/>
            <person name="Hilbert H."/>
            <person name="Holsappel S."/>
            <person name="Hosono S."/>
            <person name="Hullo M.-F."/>
            <person name="Itaya M."/>
            <person name="Jones L.-M."/>
            <person name="Joris B."/>
            <person name="Karamata D."/>
            <person name="Kasahara Y."/>
            <person name="Klaerr-Blanchard M."/>
            <person name="Klein C."/>
            <person name="Kobayashi Y."/>
            <person name="Koetter P."/>
            <person name="Koningstein G."/>
            <person name="Krogh S."/>
            <person name="Kumano M."/>
            <person name="Kurita K."/>
            <person name="Lapidus A."/>
            <person name="Lardinois S."/>
            <person name="Lauber J."/>
            <person name="Lazarevic V."/>
            <person name="Lee S.-M."/>
            <person name="Levine A."/>
            <person name="Liu H."/>
            <person name="Masuda S."/>
            <person name="Mauel C."/>
            <person name="Medigue C."/>
            <person name="Medina N."/>
            <person name="Mellado R.P."/>
            <person name="Mizuno M."/>
            <person name="Moestl D."/>
            <person name="Nakai S."/>
            <person name="Noback M."/>
            <person name="Noone D."/>
            <person name="O'Reilly M."/>
            <person name="Ogawa K."/>
            <person name="Ogiwara A."/>
            <person name="Oudega B."/>
            <person name="Park S.-H."/>
            <person name="Parro V."/>
            <person name="Pohl T.M."/>
            <person name="Portetelle D."/>
            <person name="Porwollik S."/>
            <person name="Prescott A.M."/>
            <person name="Presecan E."/>
            <person name="Pujic P."/>
            <person name="Purnelle B."/>
            <person name="Rapoport G."/>
            <person name="Rey M."/>
            <person name="Reynolds S."/>
            <person name="Rieger M."/>
            <person name="Rivolta C."/>
            <person name="Rocha E."/>
            <person name="Roche B."/>
            <person name="Rose M."/>
            <person name="Sadaie Y."/>
            <person name="Sato T."/>
            <person name="Scanlan E."/>
            <person name="Schleich S."/>
            <person name="Schroeter R."/>
            <person name="Scoffone F."/>
            <person name="Sekiguchi J."/>
            <person name="Sekowska A."/>
            <person name="Seror S.J."/>
            <person name="Serror P."/>
            <person name="Shin B.-S."/>
            <person name="Soldo B."/>
            <person name="Sorokin A."/>
            <person name="Tacconi E."/>
            <person name="Takagi T."/>
            <person name="Takahashi H."/>
            <person name="Takemaru K."/>
            <person name="Takeuchi M."/>
            <person name="Tamakoshi A."/>
            <person name="Tanaka T."/>
            <person name="Terpstra P."/>
            <person name="Tognoni A."/>
            <person name="Tosato V."/>
            <person name="Uchiyama S."/>
            <person name="Vandenbol M."/>
            <person name="Vannier F."/>
            <person name="Vassarotti A."/>
            <person name="Viari A."/>
            <person name="Wambutt R."/>
            <person name="Wedler E."/>
            <person name="Wedler H."/>
            <person name="Weitzenegger T."/>
            <person name="Winters P."/>
            <person name="Wipat A."/>
            <person name="Yamamoto H."/>
            <person name="Yamane K."/>
            <person name="Yasumoto K."/>
            <person name="Yata K."/>
            <person name="Yoshida K."/>
            <person name="Yoshikawa H.-F."/>
            <person name="Zumstein E."/>
            <person name="Yoshikawa H."/>
            <person name="Danchin A."/>
        </authorList>
    </citation>
    <scope>NUCLEOTIDE SEQUENCE [LARGE SCALE GENOMIC DNA]</scope>
    <source>
        <strain>168</strain>
    </source>
</reference>
<proteinExistence type="inferred from homology"/>
<accession>O34314</accession>
<accession>Q795P1</accession>
<gene>
    <name type="primary">ytlC</name>
    <name type="ordered locus">BSU30610</name>
</gene>
<name>YTLC_BACSU</name>
<dbReference type="EC" id="7.-.-.-"/>
<dbReference type="EMBL" id="AF008220">
    <property type="protein sequence ID" value="AAC00374.1"/>
    <property type="molecule type" value="Genomic_DNA"/>
</dbReference>
<dbReference type="EMBL" id="AL009126">
    <property type="protein sequence ID" value="CAB15039.1"/>
    <property type="molecule type" value="Genomic_DNA"/>
</dbReference>
<dbReference type="PIR" id="C69995">
    <property type="entry name" value="C69995"/>
</dbReference>
<dbReference type="RefSeq" id="NP_390939.1">
    <property type="nucleotide sequence ID" value="NC_000964.3"/>
</dbReference>
<dbReference type="RefSeq" id="WP_003229092.1">
    <property type="nucleotide sequence ID" value="NZ_OZ025638.1"/>
</dbReference>
<dbReference type="SMR" id="O34314"/>
<dbReference type="FunCoup" id="O34314">
    <property type="interactions" value="89"/>
</dbReference>
<dbReference type="STRING" id="224308.BSU30610"/>
<dbReference type="PaxDb" id="224308-BSU30610"/>
<dbReference type="EnsemblBacteria" id="CAB15039">
    <property type="protein sequence ID" value="CAB15039"/>
    <property type="gene ID" value="BSU_30610"/>
</dbReference>
<dbReference type="GeneID" id="937218"/>
<dbReference type="KEGG" id="bsu:BSU30610"/>
<dbReference type="PATRIC" id="fig|224308.179.peg.3318"/>
<dbReference type="eggNOG" id="COG1116">
    <property type="taxonomic scope" value="Bacteria"/>
</dbReference>
<dbReference type="InParanoid" id="O34314"/>
<dbReference type="OrthoDB" id="9802264at2"/>
<dbReference type="PhylomeDB" id="O34314"/>
<dbReference type="BioCyc" id="BSUB:BSU30610-MONOMER"/>
<dbReference type="Proteomes" id="UP000001570">
    <property type="component" value="Chromosome"/>
</dbReference>
<dbReference type="GO" id="GO:0005524">
    <property type="term" value="F:ATP binding"/>
    <property type="evidence" value="ECO:0007669"/>
    <property type="project" value="UniProtKB-KW"/>
</dbReference>
<dbReference type="GO" id="GO:0016887">
    <property type="term" value="F:ATP hydrolysis activity"/>
    <property type="evidence" value="ECO:0007669"/>
    <property type="project" value="InterPro"/>
</dbReference>
<dbReference type="CDD" id="cd03293">
    <property type="entry name" value="ABC_NrtD_SsuB_transporters"/>
    <property type="match status" value="1"/>
</dbReference>
<dbReference type="Gene3D" id="3.40.50.300">
    <property type="entry name" value="P-loop containing nucleotide triphosphate hydrolases"/>
    <property type="match status" value="1"/>
</dbReference>
<dbReference type="InterPro" id="IPR003593">
    <property type="entry name" value="AAA+_ATPase"/>
</dbReference>
<dbReference type="InterPro" id="IPR003439">
    <property type="entry name" value="ABC_transporter-like_ATP-bd"/>
</dbReference>
<dbReference type="InterPro" id="IPR017871">
    <property type="entry name" value="ABC_transporter-like_CS"/>
</dbReference>
<dbReference type="InterPro" id="IPR050166">
    <property type="entry name" value="ABC_transporter_ATP-bind"/>
</dbReference>
<dbReference type="InterPro" id="IPR027417">
    <property type="entry name" value="P-loop_NTPase"/>
</dbReference>
<dbReference type="PANTHER" id="PTHR42788:SF21">
    <property type="entry name" value="ABC TRANSPORTER ATP-BINDING PROTEIN"/>
    <property type="match status" value="1"/>
</dbReference>
<dbReference type="PANTHER" id="PTHR42788">
    <property type="entry name" value="TAURINE IMPORT ATP-BINDING PROTEIN-RELATED"/>
    <property type="match status" value="1"/>
</dbReference>
<dbReference type="Pfam" id="PF00005">
    <property type="entry name" value="ABC_tran"/>
    <property type="match status" value="1"/>
</dbReference>
<dbReference type="SMART" id="SM00382">
    <property type="entry name" value="AAA"/>
    <property type="match status" value="1"/>
</dbReference>
<dbReference type="SUPFAM" id="SSF52540">
    <property type="entry name" value="P-loop containing nucleoside triphosphate hydrolases"/>
    <property type="match status" value="1"/>
</dbReference>
<dbReference type="PROSITE" id="PS00211">
    <property type="entry name" value="ABC_TRANSPORTER_1"/>
    <property type="match status" value="1"/>
</dbReference>
<dbReference type="PROSITE" id="PS50893">
    <property type="entry name" value="ABC_TRANSPORTER_2"/>
    <property type="match status" value="1"/>
</dbReference>
<comment type="similarity">
    <text evidence="2">Belongs to the ABC transporter superfamily.</text>
</comment>
<sequence length="260" mass="29303">MSFLHVDHVTHTYFSIKEKTTAVRDIHFDAEKGDFISFLGPSGCGKTTLLSIIAGLIEPSEGRVLIEGREPNQKEHNIGYMLQQDYLFPWKSIEENVLLGLKIADTLTEESKAAALGLLPEFGLIDVEKKYPKELSGGMRQRAALARTLAPNPSLLLLDEPFSALDFQTKLSLENLVFRTLKEYQKTAVLVTHDIGEAIAMSDTIFLFSNQPGTIHQIFTIPKELAAMLPFDARQEPSFQTLFQTIWKELNSLEKQQRNH</sequence>
<organism>
    <name type="scientific">Bacillus subtilis (strain 168)</name>
    <dbReference type="NCBI Taxonomy" id="224308"/>
    <lineage>
        <taxon>Bacteria</taxon>
        <taxon>Bacillati</taxon>
        <taxon>Bacillota</taxon>
        <taxon>Bacilli</taxon>
        <taxon>Bacillales</taxon>
        <taxon>Bacillaceae</taxon>
        <taxon>Bacillus</taxon>
    </lineage>
</organism>
<keyword id="KW-0067">ATP-binding</keyword>
<keyword id="KW-0547">Nucleotide-binding</keyword>
<keyword id="KW-1185">Reference proteome</keyword>
<keyword id="KW-1278">Translocase</keyword>
<keyword id="KW-0813">Transport</keyword>
<feature type="chain" id="PRO_0000375894" description="Uncharacterized ABC transporter ATP-binding protein YtlC">
    <location>
        <begin position="1"/>
        <end position="260"/>
    </location>
</feature>
<feature type="domain" description="ABC transporter" evidence="1">
    <location>
        <begin position="4"/>
        <end position="231"/>
    </location>
</feature>
<feature type="binding site" evidence="1">
    <location>
        <begin position="40"/>
        <end position="47"/>
    </location>
    <ligand>
        <name>ATP</name>
        <dbReference type="ChEBI" id="CHEBI:30616"/>
    </ligand>
</feature>
<protein>
    <recommendedName>
        <fullName>Uncharacterized ABC transporter ATP-binding protein YtlC</fullName>
        <ecNumber>7.-.-.-</ecNumber>
    </recommendedName>
</protein>
<evidence type="ECO:0000255" key="1">
    <source>
        <dbReference type="PROSITE-ProRule" id="PRU00434"/>
    </source>
</evidence>
<evidence type="ECO:0000305" key="2"/>